<keyword id="KW-0025">Alternative splicing</keyword>
<keyword id="KW-0903">Direct protein sequencing</keyword>
<keyword id="KW-0274">FAD</keyword>
<keyword id="KW-0285">Flavoprotein</keyword>
<keyword id="KW-0325">Glycoprotein</keyword>
<keyword id="KW-0458">Lysosome</keyword>
<keyword id="KW-0560">Oxidoreductase</keyword>
<keyword id="KW-1267">Proteomics identification</keyword>
<keyword id="KW-1185">Reference proteome</keyword>
<keyword id="KW-0732">Signal</keyword>
<accession>Q9UHG3</accession>
<accession>B2RB14</accession>
<accession>B7Z9P8</accession>
<accession>O94982</accession>
<accession>Q8N4N5</accession>
<accession>Q96QM8</accession>
<name>PCYOX_HUMAN</name>
<dbReference type="EC" id="1.8.3.5" evidence="4 5 6"/>
<dbReference type="EMBL" id="AF181490">
    <property type="protein sequence ID" value="AAF16937.1"/>
    <property type="molecule type" value="mRNA"/>
</dbReference>
<dbReference type="EMBL" id="AB020715">
    <property type="protein sequence ID" value="BAA74931.1"/>
    <property type="status" value="ALT_INIT"/>
    <property type="molecule type" value="mRNA"/>
</dbReference>
<dbReference type="EMBL" id="AY359063">
    <property type="protein sequence ID" value="AAQ89422.1"/>
    <property type="molecule type" value="mRNA"/>
</dbReference>
<dbReference type="EMBL" id="AK314453">
    <property type="protein sequence ID" value="BAG37061.1"/>
    <property type="molecule type" value="mRNA"/>
</dbReference>
<dbReference type="EMBL" id="AK316013">
    <property type="protein sequence ID" value="BAH14384.1"/>
    <property type="molecule type" value="mRNA"/>
</dbReference>
<dbReference type="EMBL" id="AC016700">
    <property type="status" value="NOT_ANNOTATED_CDS"/>
    <property type="molecule type" value="Genomic_DNA"/>
</dbReference>
<dbReference type="EMBL" id="AC079338">
    <property type="status" value="NOT_ANNOTATED_CDS"/>
    <property type="molecule type" value="Genomic_DNA"/>
</dbReference>
<dbReference type="EMBL" id="CH471053">
    <property type="protein sequence ID" value="EAW99819.1"/>
    <property type="molecule type" value="Genomic_DNA"/>
</dbReference>
<dbReference type="EMBL" id="BC007029">
    <property type="protein sequence ID" value="AAH07029.1"/>
    <property type="molecule type" value="mRNA"/>
</dbReference>
<dbReference type="EMBL" id="BC033815">
    <property type="protein sequence ID" value="AAH33815.1"/>
    <property type="molecule type" value="mRNA"/>
</dbReference>
<dbReference type="EMBL" id="BC051891">
    <property type="protein sequence ID" value="AAH51891.1"/>
    <property type="molecule type" value="mRNA"/>
</dbReference>
<dbReference type="CCDS" id="CCDS1902.1">
    <molecule id="Q9UHG3-1"/>
</dbReference>
<dbReference type="RefSeq" id="NP_057381.3">
    <molecule id="Q9UHG3-1"/>
    <property type="nucleotide sequence ID" value="NM_016297.3"/>
</dbReference>
<dbReference type="RefSeq" id="XP_047300645.1">
    <molecule id="Q9UHG3-2"/>
    <property type="nucleotide sequence ID" value="XM_047444689.1"/>
</dbReference>
<dbReference type="RefSeq" id="XP_054198442.1">
    <molecule id="Q9UHG3-2"/>
    <property type="nucleotide sequence ID" value="XM_054342467.1"/>
</dbReference>
<dbReference type="SMR" id="Q9UHG3"/>
<dbReference type="BioGRID" id="119547">
    <property type="interactions" value="128"/>
</dbReference>
<dbReference type="FunCoup" id="Q9UHG3">
    <property type="interactions" value="808"/>
</dbReference>
<dbReference type="IntAct" id="Q9UHG3">
    <property type="interactions" value="56"/>
</dbReference>
<dbReference type="MINT" id="Q9UHG3"/>
<dbReference type="STRING" id="9606.ENSP00000387654"/>
<dbReference type="GlyConnect" id="1624">
    <property type="glycosylation" value="21 N-Linked glycans (4 sites)"/>
</dbReference>
<dbReference type="GlyCosmos" id="Q9UHG3">
    <property type="glycosylation" value="4 sites, 23 glycans"/>
</dbReference>
<dbReference type="GlyGen" id="Q9UHG3">
    <property type="glycosylation" value="6 sites, 63 N-linked glycans (4 sites), 1 O-linked glycan (1 site)"/>
</dbReference>
<dbReference type="iPTMnet" id="Q9UHG3"/>
<dbReference type="PhosphoSitePlus" id="Q9UHG3"/>
<dbReference type="SwissPalm" id="Q9UHG3"/>
<dbReference type="BioMuta" id="PCYOX1"/>
<dbReference type="DMDM" id="115311617"/>
<dbReference type="jPOST" id="Q9UHG3"/>
<dbReference type="MassIVE" id="Q9UHG3"/>
<dbReference type="PaxDb" id="9606-ENSP00000387654"/>
<dbReference type="PeptideAtlas" id="Q9UHG3"/>
<dbReference type="ProteomicsDB" id="7041"/>
<dbReference type="ProteomicsDB" id="84350">
    <molecule id="Q9UHG3-1"/>
</dbReference>
<dbReference type="Pumba" id="Q9UHG3"/>
<dbReference type="TopDownProteomics" id="Q9UHG3-1">
    <molecule id="Q9UHG3-1"/>
</dbReference>
<dbReference type="Antibodypedia" id="16314">
    <property type="antibodies" value="91 antibodies from 25 providers"/>
</dbReference>
<dbReference type="DNASU" id="51449"/>
<dbReference type="Ensembl" id="ENST00000433351.7">
    <molecule id="Q9UHG3-1"/>
    <property type="protein sequence ID" value="ENSP00000387654.2"/>
    <property type="gene ID" value="ENSG00000116005.12"/>
</dbReference>
<dbReference type="GeneID" id="51449"/>
<dbReference type="KEGG" id="hsa:51449"/>
<dbReference type="MANE-Select" id="ENST00000433351.7">
    <property type="protein sequence ID" value="ENSP00000387654.2"/>
    <property type="RefSeq nucleotide sequence ID" value="NM_016297.4"/>
    <property type="RefSeq protein sequence ID" value="NP_057381.3"/>
</dbReference>
<dbReference type="UCSC" id="uc002sgn.5">
    <molecule id="Q9UHG3-1"/>
    <property type="organism name" value="human"/>
</dbReference>
<dbReference type="AGR" id="HGNC:20588"/>
<dbReference type="CTD" id="51449"/>
<dbReference type="DisGeNET" id="51449"/>
<dbReference type="GeneCards" id="PCYOX1"/>
<dbReference type="HGNC" id="HGNC:20588">
    <property type="gene designation" value="PCYOX1"/>
</dbReference>
<dbReference type="HPA" id="ENSG00000116005">
    <property type="expression patterns" value="Low tissue specificity"/>
</dbReference>
<dbReference type="MIM" id="610995">
    <property type="type" value="gene"/>
</dbReference>
<dbReference type="neXtProt" id="NX_Q9UHG3"/>
<dbReference type="OpenTargets" id="ENSG00000116005"/>
<dbReference type="PharmGKB" id="PA134959852"/>
<dbReference type="VEuPathDB" id="HostDB:ENSG00000116005"/>
<dbReference type="eggNOG" id="ENOG502QSHJ">
    <property type="taxonomic scope" value="Eukaryota"/>
</dbReference>
<dbReference type="GeneTree" id="ENSGT00390000011206"/>
<dbReference type="HOGENOM" id="CLU_021176_1_0_1"/>
<dbReference type="InParanoid" id="Q9UHG3"/>
<dbReference type="OMA" id="SIGIWDG"/>
<dbReference type="OrthoDB" id="437369at2759"/>
<dbReference type="PAN-GO" id="Q9UHG3">
    <property type="GO annotations" value="2 GO annotations based on evolutionary models"/>
</dbReference>
<dbReference type="PhylomeDB" id="Q9UHG3"/>
<dbReference type="TreeFam" id="TF329001"/>
<dbReference type="BRENDA" id="1.8.3.5">
    <property type="organism ID" value="2681"/>
</dbReference>
<dbReference type="PathwayCommons" id="Q9UHG3"/>
<dbReference type="SignaLink" id="Q9UHG3"/>
<dbReference type="BioGRID-ORCS" id="51449">
    <property type="hits" value="13 hits in 1158 CRISPR screens"/>
</dbReference>
<dbReference type="ChiTaRS" id="PCYOX1">
    <property type="organism name" value="human"/>
</dbReference>
<dbReference type="GeneWiki" id="PCYOX1"/>
<dbReference type="GenomeRNAi" id="51449"/>
<dbReference type="Pharos" id="Q9UHG3">
    <property type="development level" value="Tbio"/>
</dbReference>
<dbReference type="PRO" id="PR:Q9UHG3"/>
<dbReference type="Proteomes" id="UP000005640">
    <property type="component" value="Chromosome 2"/>
</dbReference>
<dbReference type="RNAct" id="Q9UHG3">
    <property type="molecule type" value="protein"/>
</dbReference>
<dbReference type="Bgee" id="ENSG00000116005">
    <property type="expression patterns" value="Expressed in parotid gland and 202 other cell types or tissues"/>
</dbReference>
<dbReference type="ExpressionAtlas" id="Q9UHG3">
    <property type="expression patterns" value="baseline and differential"/>
</dbReference>
<dbReference type="GO" id="GO:0070062">
    <property type="term" value="C:extracellular exosome"/>
    <property type="evidence" value="ECO:0007005"/>
    <property type="project" value="UniProtKB"/>
</dbReference>
<dbReference type="GO" id="GO:0005764">
    <property type="term" value="C:lysosome"/>
    <property type="evidence" value="ECO:0000314"/>
    <property type="project" value="BHF-UCL"/>
</dbReference>
<dbReference type="GO" id="GO:0034361">
    <property type="term" value="C:very-low-density lipoprotein particle"/>
    <property type="evidence" value="ECO:0000314"/>
    <property type="project" value="BHF-UCL"/>
</dbReference>
<dbReference type="GO" id="GO:0071949">
    <property type="term" value="F:FAD binding"/>
    <property type="evidence" value="ECO:0000314"/>
    <property type="project" value="UniProtKB"/>
</dbReference>
<dbReference type="GO" id="GO:0102149">
    <property type="term" value="F:farnesylcysteine lyase activity"/>
    <property type="evidence" value="ECO:0007669"/>
    <property type="project" value="RHEA"/>
</dbReference>
<dbReference type="GO" id="GO:0001735">
    <property type="term" value="F:prenylcysteine oxidase activity"/>
    <property type="evidence" value="ECO:0000314"/>
    <property type="project" value="UniProtKB"/>
</dbReference>
<dbReference type="GO" id="GO:0030327">
    <property type="term" value="P:prenylated protein catabolic process"/>
    <property type="evidence" value="ECO:0000314"/>
    <property type="project" value="BHF-UCL"/>
</dbReference>
<dbReference type="GO" id="GO:0030328">
    <property type="term" value="P:prenylcysteine catabolic process"/>
    <property type="evidence" value="ECO:0000314"/>
    <property type="project" value="UniProtKB"/>
</dbReference>
<dbReference type="FunFam" id="3.50.50.60:FF:000081">
    <property type="entry name" value="prenylcysteine oxidase 1"/>
    <property type="match status" value="1"/>
</dbReference>
<dbReference type="Gene3D" id="3.50.50.60">
    <property type="entry name" value="FAD/NAD(P)-binding domain"/>
    <property type="match status" value="1"/>
</dbReference>
<dbReference type="InterPro" id="IPR036188">
    <property type="entry name" value="FAD/NAD-bd_sf"/>
</dbReference>
<dbReference type="InterPro" id="IPR010795">
    <property type="entry name" value="Prenylcys_lyase"/>
</dbReference>
<dbReference type="InterPro" id="IPR017046">
    <property type="entry name" value="Prenylcysteine_Oxase1"/>
</dbReference>
<dbReference type="PANTHER" id="PTHR15944">
    <property type="entry name" value="FARNESYLCYSTEINE LYASE"/>
    <property type="match status" value="1"/>
</dbReference>
<dbReference type="PANTHER" id="PTHR15944:SF3">
    <property type="entry name" value="PRENYLCYSTEINE OXIDASE 1"/>
    <property type="match status" value="1"/>
</dbReference>
<dbReference type="Pfam" id="PF13450">
    <property type="entry name" value="NAD_binding_8"/>
    <property type="match status" value="1"/>
</dbReference>
<dbReference type="Pfam" id="PF07156">
    <property type="entry name" value="Prenylcys_lyase"/>
    <property type="match status" value="1"/>
</dbReference>
<dbReference type="PIRSF" id="PIRSF036292">
    <property type="entry name" value="Prenylcysteine_oxidase"/>
    <property type="match status" value="1"/>
</dbReference>
<dbReference type="SUPFAM" id="SSF51905">
    <property type="entry name" value="FAD/NAD(P)-binding domain"/>
    <property type="match status" value="1"/>
</dbReference>
<reference key="1">
    <citation type="journal article" date="1999" name="J. Biol. Chem.">
        <title>Cloning, expression, and cellular localization of a human prenylcysteine lyase.</title>
        <authorList>
            <person name="Tschantz W.R."/>
            <person name="Zhang L."/>
            <person name="Casey P.J."/>
        </authorList>
    </citation>
    <scope>NUCLEOTIDE SEQUENCE [MRNA] (ISOFORM 1)</scope>
    <scope>TISSUE SPECIFICITY</scope>
    <scope>CATALYTIC ACTIVITY</scope>
    <scope>FUNCTION</scope>
    <scope>SUBCELLULAR LOCATION</scope>
    <source>
        <tissue>Brain</tissue>
    </source>
</reference>
<reference key="2">
    <citation type="journal article" date="1998" name="DNA Res.">
        <title>Prediction of the coding sequences of unidentified human genes. XII. The complete sequences of 100 new cDNA clones from brain which code for large proteins in vitro.</title>
        <authorList>
            <person name="Nagase T."/>
            <person name="Ishikawa K."/>
            <person name="Suyama M."/>
            <person name="Kikuno R."/>
            <person name="Hirosawa M."/>
            <person name="Miyajima N."/>
            <person name="Tanaka A."/>
            <person name="Kotani H."/>
            <person name="Nomura N."/>
            <person name="Ohara O."/>
        </authorList>
    </citation>
    <scope>NUCLEOTIDE SEQUENCE [LARGE SCALE MRNA] (ISOFORM 1)</scope>
    <scope>VARIANT PHE-149</scope>
    <source>
        <tissue>Brain</tissue>
    </source>
</reference>
<reference key="3">
    <citation type="journal article" date="2003" name="Genome Res.">
        <title>The secreted protein discovery initiative (SPDI), a large-scale effort to identify novel human secreted and transmembrane proteins: a bioinformatics assessment.</title>
        <authorList>
            <person name="Clark H.F."/>
            <person name="Gurney A.L."/>
            <person name="Abaya E."/>
            <person name="Baker K."/>
            <person name="Baldwin D.T."/>
            <person name="Brush J."/>
            <person name="Chen J."/>
            <person name="Chow B."/>
            <person name="Chui C."/>
            <person name="Crowley C."/>
            <person name="Currell B."/>
            <person name="Deuel B."/>
            <person name="Dowd P."/>
            <person name="Eaton D."/>
            <person name="Foster J.S."/>
            <person name="Grimaldi C."/>
            <person name="Gu Q."/>
            <person name="Hass P.E."/>
            <person name="Heldens S."/>
            <person name="Huang A."/>
            <person name="Kim H.S."/>
            <person name="Klimowski L."/>
            <person name="Jin Y."/>
            <person name="Johnson S."/>
            <person name="Lee J."/>
            <person name="Lewis L."/>
            <person name="Liao D."/>
            <person name="Mark M.R."/>
            <person name="Robbie E."/>
            <person name="Sanchez C."/>
            <person name="Schoenfeld J."/>
            <person name="Seshagiri S."/>
            <person name="Simmons L."/>
            <person name="Singh J."/>
            <person name="Smith V."/>
            <person name="Stinson J."/>
            <person name="Vagts A."/>
            <person name="Vandlen R.L."/>
            <person name="Watanabe C."/>
            <person name="Wieand D."/>
            <person name="Woods K."/>
            <person name="Xie M.-H."/>
            <person name="Yansura D.G."/>
            <person name="Yi S."/>
            <person name="Yu G."/>
            <person name="Yuan J."/>
            <person name="Zhang M."/>
            <person name="Zhang Z."/>
            <person name="Goddard A.D."/>
            <person name="Wood W.I."/>
            <person name="Godowski P.J."/>
            <person name="Gray A.M."/>
        </authorList>
    </citation>
    <scope>NUCLEOTIDE SEQUENCE [LARGE SCALE MRNA] (ISOFORM 1)</scope>
</reference>
<reference key="4">
    <citation type="journal article" date="2004" name="Nat. Genet.">
        <title>Complete sequencing and characterization of 21,243 full-length human cDNAs.</title>
        <authorList>
            <person name="Ota T."/>
            <person name="Suzuki Y."/>
            <person name="Nishikawa T."/>
            <person name="Otsuki T."/>
            <person name="Sugiyama T."/>
            <person name="Irie R."/>
            <person name="Wakamatsu A."/>
            <person name="Hayashi K."/>
            <person name="Sato H."/>
            <person name="Nagai K."/>
            <person name="Kimura K."/>
            <person name="Makita H."/>
            <person name="Sekine M."/>
            <person name="Obayashi M."/>
            <person name="Nishi T."/>
            <person name="Shibahara T."/>
            <person name="Tanaka T."/>
            <person name="Ishii S."/>
            <person name="Yamamoto J."/>
            <person name="Saito K."/>
            <person name="Kawai Y."/>
            <person name="Isono Y."/>
            <person name="Nakamura Y."/>
            <person name="Nagahari K."/>
            <person name="Murakami K."/>
            <person name="Yasuda T."/>
            <person name="Iwayanagi T."/>
            <person name="Wagatsuma M."/>
            <person name="Shiratori A."/>
            <person name="Sudo H."/>
            <person name="Hosoiri T."/>
            <person name="Kaku Y."/>
            <person name="Kodaira H."/>
            <person name="Kondo H."/>
            <person name="Sugawara M."/>
            <person name="Takahashi M."/>
            <person name="Kanda K."/>
            <person name="Yokoi T."/>
            <person name="Furuya T."/>
            <person name="Kikkawa E."/>
            <person name="Omura Y."/>
            <person name="Abe K."/>
            <person name="Kamihara K."/>
            <person name="Katsuta N."/>
            <person name="Sato K."/>
            <person name="Tanikawa M."/>
            <person name="Yamazaki M."/>
            <person name="Ninomiya K."/>
            <person name="Ishibashi T."/>
            <person name="Yamashita H."/>
            <person name="Murakawa K."/>
            <person name="Fujimori K."/>
            <person name="Tanai H."/>
            <person name="Kimata M."/>
            <person name="Watanabe M."/>
            <person name="Hiraoka S."/>
            <person name="Chiba Y."/>
            <person name="Ishida S."/>
            <person name="Ono Y."/>
            <person name="Takiguchi S."/>
            <person name="Watanabe S."/>
            <person name="Yosida M."/>
            <person name="Hotuta T."/>
            <person name="Kusano J."/>
            <person name="Kanehori K."/>
            <person name="Takahashi-Fujii A."/>
            <person name="Hara H."/>
            <person name="Tanase T.-O."/>
            <person name="Nomura Y."/>
            <person name="Togiya S."/>
            <person name="Komai F."/>
            <person name="Hara R."/>
            <person name="Takeuchi K."/>
            <person name="Arita M."/>
            <person name="Imose N."/>
            <person name="Musashino K."/>
            <person name="Yuuki H."/>
            <person name="Oshima A."/>
            <person name="Sasaki N."/>
            <person name="Aotsuka S."/>
            <person name="Yoshikawa Y."/>
            <person name="Matsunawa H."/>
            <person name="Ichihara T."/>
            <person name="Shiohata N."/>
            <person name="Sano S."/>
            <person name="Moriya S."/>
            <person name="Momiyama H."/>
            <person name="Satoh N."/>
            <person name="Takami S."/>
            <person name="Terashima Y."/>
            <person name="Suzuki O."/>
            <person name="Nakagawa S."/>
            <person name="Senoh A."/>
            <person name="Mizoguchi H."/>
            <person name="Goto Y."/>
            <person name="Shimizu F."/>
            <person name="Wakebe H."/>
            <person name="Hishigaki H."/>
            <person name="Watanabe T."/>
            <person name="Sugiyama A."/>
            <person name="Takemoto M."/>
            <person name="Kawakami B."/>
            <person name="Yamazaki M."/>
            <person name="Watanabe K."/>
            <person name="Kumagai A."/>
            <person name="Itakura S."/>
            <person name="Fukuzumi Y."/>
            <person name="Fujimori Y."/>
            <person name="Komiyama M."/>
            <person name="Tashiro H."/>
            <person name="Tanigami A."/>
            <person name="Fujiwara T."/>
            <person name="Ono T."/>
            <person name="Yamada K."/>
            <person name="Fujii Y."/>
            <person name="Ozaki K."/>
            <person name="Hirao M."/>
            <person name="Ohmori Y."/>
            <person name="Kawabata A."/>
            <person name="Hikiji T."/>
            <person name="Kobatake N."/>
            <person name="Inagaki H."/>
            <person name="Ikema Y."/>
            <person name="Okamoto S."/>
            <person name="Okitani R."/>
            <person name="Kawakami T."/>
            <person name="Noguchi S."/>
            <person name="Itoh T."/>
            <person name="Shigeta K."/>
            <person name="Senba T."/>
            <person name="Matsumura K."/>
            <person name="Nakajima Y."/>
            <person name="Mizuno T."/>
            <person name="Morinaga M."/>
            <person name="Sasaki M."/>
            <person name="Togashi T."/>
            <person name="Oyama M."/>
            <person name="Hata H."/>
            <person name="Watanabe M."/>
            <person name="Komatsu T."/>
            <person name="Mizushima-Sugano J."/>
            <person name="Satoh T."/>
            <person name="Shirai Y."/>
            <person name="Takahashi Y."/>
            <person name="Nakagawa K."/>
            <person name="Okumura K."/>
            <person name="Nagase T."/>
            <person name="Nomura N."/>
            <person name="Kikuchi H."/>
            <person name="Masuho Y."/>
            <person name="Yamashita R."/>
            <person name="Nakai K."/>
            <person name="Yada T."/>
            <person name="Nakamura Y."/>
            <person name="Ohara O."/>
            <person name="Isogai T."/>
            <person name="Sugano S."/>
        </authorList>
    </citation>
    <scope>NUCLEOTIDE SEQUENCE [LARGE SCALE MRNA] (ISOFORMS 1 AND 2)</scope>
    <source>
        <tissue>Brain</tissue>
        <tissue>Placenta</tissue>
    </source>
</reference>
<reference key="5">
    <citation type="journal article" date="2005" name="Nature">
        <title>Generation and annotation of the DNA sequences of human chromosomes 2 and 4.</title>
        <authorList>
            <person name="Hillier L.W."/>
            <person name="Graves T.A."/>
            <person name="Fulton R.S."/>
            <person name="Fulton L.A."/>
            <person name="Pepin K.H."/>
            <person name="Minx P."/>
            <person name="Wagner-McPherson C."/>
            <person name="Layman D."/>
            <person name="Wylie K."/>
            <person name="Sekhon M."/>
            <person name="Becker M.C."/>
            <person name="Fewell G.A."/>
            <person name="Delehaunty K.D."/>
            <person name="Miner T.L."/>
            <person name="Nash W.E."/>
            <person name="Kremitzki C."/>
            <person name="Oddy L."/>
            <person name="Du H."/>
            <person name="Sun H."/>
            <person name="Bradshaw-Cordum H."/>
            <person name="Ali J."/>
            <person name="Carter J."/>
            <person name="Cordes M."/>
            <person name="Harris A."/>
            <person name="Isak A."/>
            <person name="van Brunt A."/>
            <person name="Nguyen C."/>
            <person name="Du F."/>
            <person name="Courtney L."/>
            <person name="Kalicki J."/>
            <person name="Ozersky P."/>
            <person name="Abbott S."/>
            <person name="Armstrong J."/>
            <person name="Belter E.A."/>
            <person name="Caruso L."/>
            <person name="Cedroni M."/>
            <person name="Cotton M."/>
            <person name="Davidson T."/>
            <person name="Desai A."/>
            <person name="Elliott G."/>
            <person name="Erb T."/>
            <person name="Fronick C."/>
            <person name="Gaige T."/>
            <person name="Haakenson W."/>
            <person name="Haglund K."/>
            <person name="Holmes A."/>
            <person name="Harkins R."/>
            <person name="Kim K."/>
            <person name="Kruchowski S.S."/>
            <person name="Strong C.M."/>
            <person name="Grewal N."/>
            <person name="Goyea E."/>
            <person name="Hou S."/>
            <person name="Levy A."/>
            <person name="Martinka S."/>
            <person name="Mead K."/>
            <person name="McLellan M.D."/>
            <person name="Meyer R."/>
            <person name="Randall-Maher J."/>
            <person name="Tomlinson C."/>
            <person name="Dauphin-Kohlberg S."/>
            <person name="Kozlowicz-Reilly A."/>
            <person name="Shah N."/>
            <person name="Swearengen-Shahid S."/>
            <person name="Snider J."/>
            <person name="Strong J.T."/>
            <person name="Thompson J."/>
            <person name="Yoakum M."/>
            <person name="Leonard S."/>
            <person name="Pearman C."/>
            <person name="Trani L."/>
            <person name="Radionenko M."/>
            <person name="Waligorski J.E."/>
            <person name="Wang C."/>
            <person name="Rock S.M."/>
            <person name="Tin-Wollam A.-M."/>
            <person name="Maupin R."/>
            <person name="Latreille P."/>
            <person name="Wendl M.C."/>
            <person name="Yang S.-P."/>
            <person name="Pohl C."/>
            <person name="Wallis J.W."/>
            <person name="Spieth J."/>
            <person name="Bieri T.A."/>
            <person name="Berkowicz N."/>
            <person name="Nelson J.O."/>
            <person name="Osborne J."/>
            <person name="Ding L."/>
            <person name="Meyer R."/>
            <person name="Sabo A."/>
            <person name="Shotland Y."/>
            <person name="Sinha P."/>
            <person name="Wohldmann P.E."/>
            <person name="Cook L.L."/>
            <person name="Hickenbotham M.T."/>
            <person name="Eldred J."/>
            <person name="Williams D."/>
            <person name="Jones T.A."/>
            <person name="She X."/>
            <person name="Ciccarelli F.D."/>
            <person name="Izaurralde E."/>
            <person name="Taylor J."/>
            <person name="Schmutz J."/>
            <person name="Myers R.M."/>
            <person name="Cox D.R."/>
            <person name="Huang X."/>
            <person name="McPherson J.D."/>
            <person name="Mardis E.R."/>
            <person name="Clifton S.W."/>
            <person name="Warren W.C."/>
            <person name="Chinwalla A.T."/>
            <person name="Eddy S.R."/>
            <person name="Marra M.A."/>
            <person name="Ovcharenko I."/>
            <person name="Furey T.S."/>
            <person name="Miller W."/>
            <person name="Eichler E.E."/>
            <person name="Bork P."/>
            <person name="Suyama M."/>
            <person name="Torrents D."/>
            <person name="Waterston R.H."/>
            <person name="Wilson R.K."/>
        </authorList>
    </citation>
    <scope>NUCLEOTIDE SEQUENCE [LARGE SCALE GENOMIC DNA]</scope>
</reference>
<reference key="6">
    <citation type="submission" date="2005-09" db="EMBL/GenBank/DDBJ databases">
        <authorList>
            <person name="Mural R.J."/>
            <person name="Istrail S."/>
            <person name="Sutton G.G."/>
            <person name="Florea L."/>
            <person name="Halpern A.L."/>
            <person name="Mobarry C.M."/>
            <person name="Lippert R."/>
            <person name="Walenz B."/>
            <person name="Shatkay H."/>
            <person name="Dew I."/>
            <person name="Miller J.R."/>
            <person name="Flanigan M.J."/>
            <person name="Edwards N.J."/>
            <person name="Bolanos R."/>
            <person name="Fasulo D."/>
            <person name="Halldorsson B.V."/>
            <person name="Hannenhalli S."/>
            <person name="Turner R."/>
            <person name="Yooseph S."/>
            <person name="Lu F."/>
            <person name="Nusskern D.R."/>
            <person name="Shue B.C."/>
            <person name="Zheng X.H."/>
            <person name="Zhong F."/>
            <person name="Delcher A.L."/>
            <person name="Huson D.H."/>
            <person name="Kravitz S.A."/>
            <person name="Mouchard L."/>
            <person name="Reinert K."/>
            <person name="Remington K.A."/>
            <person name="Clark A.G."/>
            <person name="Waterman M.S."/>
            <person name="Eichler E.E."/>
            <person name="Adams M.D."/>
            <person name="Hunkapiller M.W."/>
            <person name="Myers E.W."/>
            <person name="Venter J.C."/>
        </authorList>
    </citation>
    <scope>NUCLEOTIDE SEQUENCE [LARGE SCALE GENOMIC DNA]</scope>
</reference>
<reference key="7">
    <citation type="journal article" date="2004" name="Genome Res.">
        <title>The status, quality, and expansion of the NIH full-length cDNA project: the Mammalian Gene Collection (MGC).</title>
        <authorList>
            <consortium name="The MGC Project Team"/>
        </authorList>
    </citation>
    <scope>NUCLEOTIDE SEQUENCE [LARGE SCALE MRNA] (ISOFORM 1)</scope>
    <source>
        <tissue>Heart</tissue>
        <tissue>Lung</tissue>
    </source>
</reference>
<reference key="8">
    <citation type="submission" date="2005-06" db="UniProtKB">
        <authorList>
            <person name="Bienvenut W.V."/>
        </authorList>
    </citation>
    <scope>PROTEIN SEQUENCE OF 37-54; 256-266 AND 421-430</scope>
    <scope>IDENTIFICATION BY MASS SPECTROMETRY</scope>
    <source>
        <tissue>B-cell lymphoma</tissue>
    </source>
</reference>
<reference key="9">
    <citation type="journal article" date="2001" name="J. Biol. Chem.">
        <title>Lysosomal prenylcysteine lyase is a FAD-dependent thioether oxidase.</title>
        <authorList>
            <person name="Tschantz W.R."/>
            <person name="Digits J.A."/>
            <person name="Pyun H.J."/>
            <person name="Coates R.M."/>
            <person name="Casey P.J."/>
        </authorList>
    </citation>
    <scope>FUNCTION</scope>
    <scope>CATALYTIC ACTIVITY</scope>
    <scope>COFACTOR</scope>
</reference>
<reference key="10">
    <citation type="journal article" date="2002" name="J. Biol. Chem.">
        <title>Stereospecificity and kinetic mechanism of human prenylcysteine lyase, an unusual thioether oxidase.</title>
        <authorList>
            <person name="Digits J.A."/>
            <person name="Pyun H.J."/>
            <person name="Coates R.M."/>
            <person name="Casey P.J."/>
        </authorList>
    </citation>
    <scope>FUNCTION</scope>
    <scope>CATALYTIC ACTIVITY</scope>
    <scope>BIOPHYSICOCHEMICAL PROPERTIES</scope>
</reference>
<reference key="11">
    <citation type="journal article" date="2005" name="J. Proteome Res.">
        <title>Human plasma N-glycoproteome analysis by immunoaffinity subtraction, hydrazide chemistry, and mass spectrometry.</title>
        <authorList>
            <person name="Liu T."/>
            <person name="Qian W.-J."/>
            <person name="Gritsenko M.A."/>
            <person name="Camp D.G. II"/>
            <person name="Monroe M.E."/>
            <person name="Moore R.J."/>
            <person name="Smith R.D."/>
        </authorList>
    </citation>
    <scope>GLYCOSYLATION [LARGE SCALE ANALYSIS] AT ASN-196; ASN-323 AND ASN-353</scope>
    <source>
        <tissue>Plasma</tissue>
    </source>
</reference>
<reference key="12">
    <citation type="journal article" date="2009" name="J. Proteome Res.">
        <title>Glycoproteomics analysis of human liver tissue by combination of multiple enzyme digestion and hydrazide chemistry.</title>
        <authorList>
            <person name="Chen R."/>
            <person name="Jiang X."/>
            <person name="Sun D."/>
            <person name="Han G."/>
            <person name="Wang F."/>
            <person name="Ye M."/>
            <person name="Wang L."/>
            <person name="Zou H."/>
        </authorList>
    </citation>
    <scope>GLYCOSYLATION [LARGE SCALE ANALYSIS] AT ASN-196 AND ASN-353</scope>
    <source>
        <tissue>Liver</tissue>
    </source>
</reference>
<reference key="13">
    <citation type="journal article" date="2011" name="BMC Syst. Biol.">
        <title>Initial characterization of the human central proteome.</title>
        <authorList>
            <person name="Burkard T.R."/>
            <person name="Planyavsky M."/>
            <person name="Kaupe I."/>
            <person name="Breitwieser F.P."/>
            <person name="Buerckstuemmer T."/>
            <person name="Bennett K.L."/>
            <person name="Superti-Furga G."/>
            <person name="Colinge J."/>
        </authorList>
    </citation>
    <scope>IDENTIFICATION BY MASS SPECTROMETRY [LARGE SCALE ANALYSIS]</scope>
</reference>
<reference key="14">
    <citation type="journal article" date="2014" name="J. Proteomics">
        <title>An enzyme assisted RP-RPLC approach for in-depth analysis of human liver phosphoproteome.</title>
        <authorList>
            <person name="Bian Y."/>
            <person name="Song C."/>
            <person name="Cheng K."/>
            <person name="Dong M."/>
            <person name="Wang F."/>
            <person name="Huang J."/>
            <person name="Sun D."/>
            <person name="Wang L."/>
            <person name="Ye M."/>
            <person name="Zou H."/>
        </authorList>
    </citation>
    <scope>IDENTIFICATION BY MASS SPECTROMETRY [LARGE SCALE ANALYSIS]</scope>
    <source>
        <tissue>Liver</tissue>
    </source>
</reference>
<reference key="15">
    <citation type="journal article" date="2015" name="Proteomics">
        <title>N-terminome analysis of the human mitochondrial proteome.</title>
        <authorList>
            <person name="Vaca Jacome A.S."/>
            <person name="Rabilloud T."/>
            <person name="Schaeffer-Reiss C."/>
            <person name="Rompais M."/>
            <person name="Ayoub D."/>
            <person name="Lane L."/>
            <person name="Bairoch A."/>
            <person name="Van Dorsselaer A."/>
            <person name="Carapito C."/>
        </authorList>
    </citation>
    <scope>IDENTIFICATION BY MASS SPECTROMETRY [LARGE SCALE ANALYSIS]</scope>
</reference>
<gene>
    <name evidence="15" type="primary">PCYOX1</name>
    <name evidence="9" type="synonym">KIAA0908</name>
    <name type="synonym">PCL1</name>
    <name evidence="11" type="ORF">UNQ597/PRO1183</name>
</gene>
<protein>
    <recommendedName>
        <fullName evidence="13">Prenylcysteine oxidase 1</fullName>
        <ecNumber evidence="4 5 6">1.8.3.5</ecNumber>
    </recommendedName>
    <alternativeName>
        <fullName evidence="10">Prenylcysteine lyase</fullName>
    </alternativeName>
</protein>
<feature type="signal peptide" evidence="2">
    <location>
        <begin position="1"/>
        <end position="27"/>
    </location>
</feature>
<feature type="chain" id="PRO_0000023298" description="Prenylcysteine oxidase 1">
    <location>
        <begin position="28"/>
        <end position="505"/>
    </location>
</feature>
<feature type="glycosylation site" description="N-linked (GlcNAc...) asparagine" evidence="7 8">
    <location>
        <position position="196"/>
    </location>
</feature>
<feature type="glycosylation site" description="N-linked (GlcNAc...) asparagine" evidence="7">
    <location>
        <position position="323"/>
    </location>
</feature>
<feature type="glycosylation site" description="N-linked (GlcNAc...) asparagine" evidence="7 8">
    <location>
        <position position="353"/>
    </location>
</feature>
<feature type="splice variant" id="VSP_056701" description="In isoform 2." evidence="12">
    <location>
        <begin position="1"/>
        <end position="77"/>
    </location>
</feature>
<feature type="sequence variant" id="VAR_050469" description="In dbSNP:rs2706762." evidence="3">
    <original>S</original>
    <variation>F</variation>
    <location>
        <position position="149"/>
    </location>
</feature>
<feature type="sequence variant" id="VAR_050470" description="In dbSNP:rs17005441.">
    <original>T</original>
    <variation>S</variation>
    <location>
        <position position="414"/>
    </location>
</feature>
<feature type="sequence variant" id="VAR_050471" description="In dbSNP:rs34041544.">
    <original>S</original>
    <variation>G</variation>
    <location>
        <position position="465"/>
    </location>
</feature>
<feature type="sequence conflict" description="In Ref. 1; AAF16937." evidence="13" ref="1">
    <original>Q</original>
    <variation>H</variation>
    <location>
        <position position="341"/>
    </location>
</feature>
<proteinExistence type="evidence at protein level"/>
<evidence type="ECO:0000250" key="1">
    <source>
        <dbReference type="UniProtKB" id="F1N2K1"/>
    </source>
</evidence>
<evidence type="ECO:0000255" key="2"/>
<evidence type="ECO:0000269" key="3">
    <source>
    </source>
</evidence>
<evidence type="ECO:0000269" key="4">
    <source>
    </source>
</evidence>
<evidence type="ECO:0000269" key="5">
    <source>
    </source>
</evidence>
<evidence type="ECO:0000269" key="6">
    <source>
    </source>
</evidence>
<evidence type="ECO:0000269" key="7">
    <source>
    </source>
</evidence>
<evidence type="ECO:0000269" key="8">
    <source>
    </source>
</evidence>
<evidence type="ECO:0000303" key="9">
    <source>
    </source>
</evidence>
<evidence type="ECO:0000303" key="10">
    <source>
    </source>
</evidence>
<evidence type="ECO:0000303" key="11">
    <source>
    </source>
</evidence>
<evidence type="ECO:0000303" key="12">
    <source>
    </source>
</evidence>
<evidence type="ECO:0000305" key="13"/>
<evidence type="ECO:0000305" key="14">
    <source>
    </source>
</evidence>
<evidence type="ECO:0000312" key="15">
    <source>
        <dbReference type="HGNC" id="HGNC:20588"/>
    </source>
</evidence>
<sequence length="505" mass="56640">MGRVVAELVSSLLGLWLLLCSCGCPEGAELRAPPDKIAIIGAGIGGTSAAYYLRQKFGKDVKIDLFEREEVGGRLATMMVQGQEYEAGGSVIHPLNLHMKRFVKDLGLSAVQASGGLLGIYNGETLVFEESNWFIINVIKLVWRYGFQSLRMHMWVEDVLDKFMRIYRYQSHDYAFSSVEKLLHALGGDDFLGMLNRTLLETLQKAGFSEKFLNEMIAPVMRVNYGQSTDINAFVGAVSLSCSDSGLWAVEGGNKLVCSGLLQASKSNLISGSVMYIEEKTKTKYTGNPTKMYEVVYQIGTETRSDFYDIVLVATPLNRKMSNITFLNFDPPIEEFHQYYQHIVTTLVKGELNTSIFSSRPIDKFGLNTVLTTDNSDLFINSIGIVPSVREKEDPEPSTDGTYVWKIFSQETLTKAQILKLFLSYDYAVKKPWLAYPHYKPPEKCPSIILHDRLYYLNGIECAASAMEMSAIAAHNAALLAYHRWNGHTDMIDQDGLYEKLKTEL</sequence>
<comment type="function">
    <text evidence="1 4 5 6">Prenylcysteine oxidase that cleaves the thioether bond of prenyl-L-cysteines, such as farnesylcysteine and geranylgeranylcysteine (PubMed:10585463, PubMed:11078725, PubMed:12186880). Only active against free prenylcysteines and not prenylcysteine residues within prenylated proteins or peptides (By similarity). Involved in the final step in the degradation of prenylated proteins, by degrading prenylcysteines after the protein has been degraded (PubMed:10585463).</text>
</comment>
<comment type="catalytic activity">
    <reaction evidence="4 5 6">
        <text>an S-polyprenyl-L-cysteine + O2 + H2O = a polyprenal + L-cysteine + H2O2</text>
        <dbReference type="Rhea" id="RHEA:53892"/>
        <dbReference type="Rhea" id="RHEA-COMP:13675"/>
        <dbReference type="Rhea" id="RHEA-COMP:13676"/>
        <dbReference type="ChEBI" id="CHEBI:15377"/>
        <dbReference type="ChEBI" id="CHEBI:15379"/>
        <dbReference type="ChEBI" id="CHEBI:16240"/>
        <dbReference type="ChEBI" id="CHEBI:35235"/>
        <dbReference type="ChEBI" id="CHEBI:137934"/>
        <dbReference type="ChEBI" id="CHEBI:137935"/>
        <dbReference type="EC" id="1.8.3.5"/>
    </reaction>
    <physiologicalReaction direction="left-to-right" evidence="4 5 6">
        <dbReference type="Rhea" id="RHEA:53893"/>
    </physiologicalReaction>
</comment>
<comment type="catalytic activity">
    <reaction evidence="4 5 6">
        <text>S-(2E,6E)-farnesyl-L-cysteine + O2 + H2O = (2E,6E)-farnesal + L-cysteine + H2O2</text>
        <dbReference type="Rhea" id="RHEA:30231"/>
        <dbReference type="ChEBI" id="CHEBI:15377"/>
        <dbReference type="ChEBI" id="CHEBI:15379"/>
        <dbReference type="ChEBI" id="CHEBI:15894"/>
        <dbReference type="ChEBI" id="CHEBI:16240"/>
        <dbReference type="ChEBI" id="CHEBI:35235"/>
        <dbReference type="ChEBI" id="CHEBI:62141"/>
        <dbReference type="EC" id="1.8.3.5"/>
    </reaction>
    <physiologicalReaction direction="left-to-right" evidence="4 5 6">
        <dbReference type="Rhea" id="RHEA:30232"/>
    </physiologicalReaction>
</comment>
<comment type="catalytic activity">
    <reaction evidence="4">
        <text>[(2E,6E,10E)-geranylgeranyl]-L-cysteine + O2 + H2O = (2E,6E,10E)-geranylgeranial + L-cysteine + H2O2</text>
        <dbReference type="Rhea" id="RHEA:70407"/>
        <dbReference type="ChEBI" id="CHEBI:15377"/>
        <dbReference type="ChEBI" id="CHEBI:15379"/>
        <dbReference type="ChEBI" id="CHEBI:16240"/>
        <dbReference type="ChEBI" id="CHEBI:35235"/>
        <dbReference type="ChEBI" id="CHEBI:189549"/>
        <dbReference type="ChEBI" id="CHEBI:189554"/>
        <dbReference type="EC" id="1.8.3.5"/>
    </reaction>
    <physiologicalReaction direction="left-to-right" evidence="4">
        <dbReference type="Rhea" id="RHEA:70408"/>
    </physiologicalReaction>
</comment>
<comment type="cofactor">
    <cofactor evidence="5">
        <name>FAD</name>
        <dbReference type="ChEBI" id="CHEBI:57692"/>
    </cofactor>
</comment>
<comment type="biophysicochemical properties">
    <kinetics>
        <KM evidence="6">3 uM for free farnesylcysteine</KM>
        <text evidence="6">kcat is 8000 sec(-1) for free farnesylcysteine.</text>
    </kinetics>
</comment>
<comment type="interaction">
    <interactant intactId="EBI-2908417">
        <id>Q9UHG3</id>
    </interactant>
    <interactant intactId="EBI-2834366">
        <id>Q9Y227</id>
        <label>ENTPD4</label>
    </interactant>
    <organismsDiffer>false</organismsDiffer>
    <experiments>2</experiments>
</comment>
<comment type="interaction">
    <interactant intactId="EBI-2908417">
        <id>Q9UHG3</id>
    </interactant>
    <interactant intactId="EBI-3908586">
        <id>O75712</id>
        <label>GJB3</label>
    </interactant>
    <organismsDiffer>false</organismsDiffer>
    <experiments>2</experiments>
</comment>
<comment type="interaction">
    <interactant intactId="EBI-2908417">
        <id>Q9UHG3</id>
    </interactant>
    <interactant intactId="EBI-740785">
        <id>P49639</id>
        <label>HOXA1</label>
    </interactant>
    <organismsDiffer>false</organismsDiffer>
    <experiments>3</experiments>
</comment>
<comment type="subcellular location">
    <subcellularLocation>
        <location evidence="4">Lysosome</location>
    </subcellularLocation>
</comment>
<comment type="alternative products">
    <event type="alternative splicing"/>
    <isoform>
        <id>Q9UHG3-1</id>
        <name>1</name>
        <sequence type="displayed"/>
    </isoform>
    <isoform>
        <id>Q9UHG3-2</id>
        <name>2</name>
        <sequence type="described" ref="VSP_056701"/>
    </isoform>
</comment>
<comment type="tissue specificity">
    <text evidence="4">Widely expressed.</text>
</comment>
<comment type="similarity">
    <text evidence="13">Belongs to the prenylcysteine oxidase family.</text>
</comment>
<comment type="caution">
    <text evidence="14">Was originally thought to be a lyase and was therefore termed prenylcysteine lyase.</text>
</comment>
<comment type="sequence caution" evidence="13">
    <conflict type="erroneous initiation">
        <sequence resource="EMBL-CDS" id="BAA74931"/>
    </conflict>
</comment>
<organism>
    <name type="scientific">Homo sapiens</name>
    <name type="common">Human</name>
    <dbReference type="NCBI Taxonomy" id="9606"/>
    <lineage>
        <taxon>Eukaryota</taxon>
        <taxon>Metazoa</taxon>
        <taxon>Chordata</taxon>
        <taxon>Craniata</taxon>
        <taxon>Vertebrata</taxon>
        <taxon>Euteleostomi</taxon>
        <taxon>Mammalia</taxon>
        <taxon>Eutheria</taxon>
        <taxon>Euarchontoglires</taxon>
        <taxon>Primates</taxon>
        <taxon>Haplorrhini</taxon>
        <taxon>Catarrhini</taxon>
        <taxon>Hominidae</taxon>
        <taxon>Homo</taxon>
    </lineage>
</organism>